<gene>
    <name evidence="1" type="primary">recR</name>
    <name type="ordered locus">MGAS2096_Spy1230</name>
</gene>
<keyword id="KW-0227">DNA damage</keyword>
<keyword id="KW-0233">DNA recombination</keyword>
<keyword id="KW-0234">DNA repair</keyword>
<keyword id="KW-0479">Metal-binding</keyword>
<keyword id="KW-0862">Zinc</keyword>
<keyword id="KW-0863">Zinc-finger</keyword>
<protein>
    <recommendedName>
        <fullName evidence="1">Recombination protein RecR</fullName>
    </recommendedName>
</protein>
<dbReference type="EMBL" id="CP000261">
    <property type="protein sequence ID" value="ABF36282.1"/>
    <property type="molecule type" value="Genomic_DNA"/>
</dbReference>
<dbReference type="SMR" id="Q1JAX6"/>
<dbReference type="KEGG" id="spj:MGAS2096_Spy1230"/>
<dbReference type="HOGENOM" id="CLU_060739_1_0_9"/>
<dbReference type="GO" id="GO:0003677">
    <property type="term" value="F:DNA binding"/>
    <property type="evidence" value="ECO:0007669"/>
    <property type="project" value="UniProtKB-UniRule"/>
</dbReference>
<dbReference type="GO" id="GO:0008270">
    <property type="term" value="F:zinc ion binding"/>
    <property type="evidence" value="ECO:0007669"/>
    <property type="project" value="UniProtKB-KW"/>
</dbReference>
<dbReference type="GO" id="GO:0006310">
    <property type="term" value="P:DNA recombination"/>
    <property type="evidence" value="ECO:0007669"/>
    <property type="project" value="UniProtKB-UniRule"/>
</dbReference>
<dbReference type="GO" id="GO:0006281">
    <property type="term" value="P:DNA repair"/>
    <property type="evidence" value="ECO:0007669"/>
    <property type="project" value="UniProtKB-UniRule"/>
</dbReference>
<dbReference type="CDD" id="cd01025">
    <property type="entry name" value="TOPRIM_recR"/>
    <property type="match status" value="1"/>
</dbReference>
<dbReference type="Gene3D" id="3.30.60.80">
    <property type="match status" value="1"/>
</dbReference>
<dbReference type="Gene3D" id="3.40.1360.10">
    <property type="match status" value="1"/>
</dbReference>
<dbReference type="Gene3D" id="6.10.250.240">
    <property type="match status" value="1"/>
</dbReference>
<dbReference type="Gene3D" id="1.10.8.420">
    <property type="entry name" value="RecR Domain 1"/>
    <property type="match status" value="1"/>
</dbReference>
<dbReference type="HAMAP" id="MF_00017">
    <property type="entry name" value="RecR"/>
    <property type="match status" value="1"/>
</dbReference>
<dbReference type="InterPro" id="IPR000093">
    <property type="entry name" value="DNA_Rcmb_RecR"/>
</dbReference>
<dbReference type="InterPro" id="IPR023627">
    <property type="entry name" value="Rcmb_RecR"/>
</dbReference>
<dbReference type="InterPro" id="IPR015967">
    <property type="entry name" value="Rcmb_RecR_Znf"/>
</dbReference>
<dbReference type="InterPro" id="IPR006171">
    <property type="entry name" value="TOPRIM_dom"/>
</dbReference>
<dbReference type="InterPro" id="IPR034137">
    <property type="entry name" value="TOPRIM_RecR"/>
</dbReference>
<dbReference type="NCBIfam" id="TIGR00615">
    <property type="entry name" value="recR"/>
    <property type="match status" value="1"/>
</dbReference>
<dbReference type="PANTHER" id="PTHR30446">
    <property type="entry name" value="RECOMBINATION PROTEIN RECR"/>
    <property type="match status" value="1"/>
</dbReference>
<dbReference type="PANTHER" id="PTHR30446:SF0">
    <property type="entry name" value="RECOMBINATION PROTEIN RECR"/>
    <property type="match status" value="1"/>
</dbReference>
<dbReference type="Pfam" id="PF21175">
    <property type="entry name" value="RecR_C"/>
    <property type="match status" value="1"/>
</dbReference>
<dbReference type="Pfam" id="PF21176">
    <property type="entry name" value="RecR_HhH"/>
    <property type="match status" value="1"/>
</dbReference>
<dbReference type="Pfam" id="PF02132">
    <property type="entry name" value="RecR_ZnF"/>
    <property type="match status" value="1"/>
</dbReference>
<dbReference type="Pfam" id="PF13662">
    <property type="entry name" value="Toprim_4"/>
    <property type="match status" value="1"/>
</dbReference>
<dbReference type="SMART" id="SM00493">
    <property type="entry name" value="TOPRIM"/>
    <property type="match status" value="1"/>
</dbReference>
<dbReference type="SUPFAM" id="SSF111304">
    <property type="entry name" value="Recombination protein RecR"/>
    <property type="match status" value="1"/>
</dbReference>
<dbReference type="PROSITE" id="PS01300">
    <property type="entry name" value="RECR"/>
    <property type="match status" value="1"/>
</dbReference>
<dbReference type="PROSITE" id="PS50880">
    <property type="entry name" value="TOPRIM"/>
    <property type="match status" value="1"/>
</dbReference>
<name>RECR_STRPB</name>
<proteinExistence type="inferred from homology"/>
<sequence>MLYPTPIAKLIDSYSKLPGIGIKTATRLAFYTIGMSNEDVNDFAKNLLAAKRELTYCSICGNLTDDDPCHICTDTSRDQTTILVVEDAKDVSAMEKIQEYHGYYHVLHGLISPMNGVGPDDINLKSLITRLMDGKVSEVIVATNATADGEATSMYISRVLKPAGIKVTRLARGLAVGSDIEYADEVTLLRAIENRTEL</sequence>
<organism>
    <name type="scientific">Streptococcus pyogenes serotype M12 (strain MGAS2096)</name>
    <dbReference type="NCBI Taxonomy" id="370553"/>
    <lineage>
        <taxon>Bacteria</taxon>
        <taxon>Bacillati</taxon>
        <taxon>Bacillota</taxon>
        <taxon>Bacilli</taxon>
        <taxon>Lactobacillales</taxon>
        <taxon>Streptococcaceae</taxon>
        <taxon>Streptococcus</taxon>
    </lineage>
</organism>
<accession>Q1JAX6</accession>
<evidence type="ECO:0000255" key="1">
    <source>
        <dbReference type="HAMAP-Rule" id="MF_00017"/>
    </source>
</evidence>
<feature type="chain" id="PRO_1000001626" description="Recombination protein RecR">
    <location>
        <begin position="1"/>
        <end position="198"/>
    </location>
</feature>
<feature type="domain" description="Toprim" evidence="1">
    <location>
        <begin position="80"/>
        <end position="175"/>
    </location>
</feature>
<feature type="zinc finger region" description="C4-type" evidence="1">
    <location>
        <begin position="57"/>
        <end position="72"/>
    </location>
</feature>
<comment type="function">
    <text evidence="1">May play a role in DNA repair. It seems to be involved in an RecBC-independent recombinational process of DNA repair. It may act with RecF and RecO.</text>
</comment>
<comment type="similarity">
    <text evidence="1">Belongs to the RecR family.</text>
</comment>
<reference key="1">
    <citation type="journal article" date="2006" name="Proc. Natl. Acad. Sci. U.S.A.">
        <title>Molecular genetic anatomy of inter- and intraserotype variation in the human bacterial pathogen group A Streptococcus.</title>
        <authorList>
            <person name="Beres S.B."/>
            <person name="Richter E.W."/>
            <person name="Nagiec M.J."/>
            <person name="Sumby P."/>
            <person name="Porcella S.F."/>
            <person name="DeLeo F.R."/>
            <person name="Musser J.M."/>
        </authorList>
    </citation>
    <scope>NUCLEOTIDE SEQUENCE [LARGE SCALE GENOMIC DNA]</scope>
    <source>
        <strain>MGAS2096</strain>
    </source>
</reference>